<feature type="chain" id="PRO_0000187380" description="Large ribosomal subunit protein bL34">
    <location>
        <begin position="1"/>
        <end position="44"/>
    </location>
</feature>
<keyword id="KW-0687">Ribonucleoprotein</keyword>
<keyword id="KW-0689">Ribosomal protein</keyword>
<accession>Q5FFS7</accession>
<organism>
    <name type="scientific">Ehrlichia ruminantium (strain Gardel)</name>
    <dbReference type="NCBI Taxonomy" id="302409"/>
    <lineage>
        <taxon>Bacteria</taxon>
        <taxon>Pseudomonadati</taxon>
        <taxon>Pseudomonadota</taxon>
        <taxon>Alphaproteobacteria</taxon>
        <taxon>Rickettsiales</taxon>
        <taxon>Anaplasmataceae</taxon>
        <taxon>Ehrlichia</taxon>
    </lineage>
</organism>
<name>RL34_EHRRG</name>
<evidence type="ECO:0000255" key="1">
    <source>
        <dbReference type="HAMAP-Rule" id="MF_00391"/>
    </source>
</evidence>
<evidence type="ECO:0000305" key="2"/>
<comment type="similarity">
    <text evidence="1">Belongs to the bacterial ribosomal protein bL34 family.</text>
</comment>
<gene>
    <name evidence="1" type="primary">rpmH</name>
    <name type="ordered locus">ERGA_CDS_06000</name>
</gene>
<sequence>MRQTFQPSRIVRKRRHGFRTRMSTRMGRKILNRRRTQGRRVLCA</sequence>
<protein>
    <recommendedName>
        <fullName evidence="1">Large ribosomal subunit protein bL34</fullName>
    </recommendedName>
    <alternativeName>
        <fullName evidence="2">50S ribosomal protein L34</fullName>
    </alternativeName>
</protein>
<proteinExistence type="inferred from homology"/>
<reference key="1">
    <citation type="journal article" date="2006" name="J. Bacteriol.">
        <title>Comparative genomic analysis of three strains of Ehrlichia ruminantium reveals an active process of genome size plasticity.</title>
        <authorList>
            <person name="Frutos R."/>
            <person name="Viari A."/>
            <person name="Ferraz C."/>
            <person name="Morgat A."/>
            <person name="Eychenie S."/>
            <person name="Kandassamy Y."/>
            <person name="Chantal I."/>
            <person name="Bensaid A."/>
            <person name="Coissac E."/>
            <person name="Vachiery N."/>
            <person name="Demaille J."/>
            <person name="Martinez D."/>
        </authorList>
    </citation>
    <scope>NUCLEOTIDE SEQUENCE [LARGE SCALE GENOMIC DNA]</scope>
    <source>
        <strain>Gardel</strain>
    </source>
</reference>
<dbReference type="EMBL" id="CR925677">
    <property type="protein sequence ID" value="CAI28052.1"/>
    <property type="molecule type" value="Genomic_DNA"/>
</dbReference>
<dbReference type="SMR" id="Q5FFS7"/>
<dbReference type="KEGG" id="erg:ERGA_CDS_06000"/>
<dbReference type="HOGENOM" id="CLU_129938_2_0_5"/>
<dbReference type="OrthoDB" id="9804164at2"/>
<dbReference type="Proteomes" id="UP000000533">
    <property type="component" value="Chromosome"/>
</dbReference>
<dbReference type="GO" id="GO:1990904">
    <property type="term" value="C:ribonucleoprotein complex"/>
    <property type="evidence" value="ECO:0007669"/>
    <property type="project" value="UniProtKB-KW"/>
</dbReference>
<dbReference type="GO" id="GO:0005840">
    <property type="term" value="C:ribosome"/>
    <property type="evidence" value="ECO:0007669"/>
    <property type="project" value="UniProtKB-KW"/>
</dbReference>
<dbReference type="GO" id="GO:0003735">
    <property type="term" value="F:structural constituent of ribosome"/>
    <property type="evidence" value="ECO:0007669"/>
    <property type="project" value="InterPro"/>
</dbReference>
<dbReference type="GO" id="GO:0006412">
    <property type="term" value="P:translation"/>
    <property type="evidence" value="ECO:0007669"/>
    <property type="project" value="UniProtKB-UniRule"/>
</dbReference>
<dbReference type="FunFam" id="1.10.287.3980:FF:000001">
    <property type="entry name" value="Mitochondrial ribosomal protein L34"/>
    <property type="match status" value="1"/>
</dbReference>
<dbReference type="Gene3D" id="1.10.287.3980">
    <property type="match status" value="1"/>
</dbReference>
<dbReference type="HAMAP" id="MF_00391">
    <property type="entry name" value="Ribosomal_bL34"/>
    <property type="match status" value="1"/>
</dbReference>
<dbReference type="InterPro" id="IPR000271">
    <property type="entry name" value="Ribosomal_bL34"/>
</dbReference>
<dbReference type="NCBIfam" id="TIGR01030">
    <property type="entry name" value="rpmH_bact"/>
    <property type="match status" value="1"/>
</dbReference>
<dbReference type="PANTHER" id="PTHR14503:SF4">
    <property type="entry name" value="LARGE RIBOSOMAL SUBUNIT PROTEIN BL34M"/>
    <property type="match status" value="1"/>
</dbReference>
<dbReference type="PANTHER" id="PTHR14503">
    <property type="entry name" value="MITOCHONDRIAL RIBOSOMAL PROTEIN 34 FAMILY MEMBER"/>
    <property type="match status" value="1"/>
</dbReference>
<dbReference type="Pfam" id="PF00468">
    <property type="entry name" value="Ribosomal_L34"/>
    <property type="match status" value="1"/>
</dbReference>